<feature type="chain" id="PRO_0000087411" description="Glucose-6-phosphatase catalytic subunit 1">
    <location>
        <begin position="1"/>
        <end position="352"/>
    </location>
</feature>
<feature type="topological domain" description="Lumenal" evidence="1">
    <location>
        <begin position="1"/>
        <end position="27"/>
    </location>
</feature>
<feature type="transmembrane region" description="Helical" evidence="2">
    <location>
        <begin position="28"/>
        <end position="48"/>
    </location>
</feature>
<feature type="topological domain" description="Cytoplasmic" evidence="1">
    <location>
        <begin position="49"/>
        <end position="56"/>
    </location>
</feature>
<feature type="transmembrane region" description="Helical" evidence="2">
    <location>
        <begin position="57"/>
        <end position="77"/>
    </location>
</feature>
<feature type="topological domain" description="Lumenal" evidence="1">
    <location>
        <begin position="78"/>
        <end position="113"/>
    </location>
</feature>
<feature type="transmembrane region" description="Helical" evidence="2">
    <location>
        <begin position="114"/>
        <end position="134"/>
    </location>
</feature>
<feature type="topological domain" description="Cytoplasmic" evidence="1">
    <location>
        <begin position="135"/>
        <end position="141"/>
    </location>
</feature>
<feature type="transmembrane region" description="Helical" evidence="2">
    <location>
        <begin position="142"/>
        <end position="162"/>
    </location>
</feature>
<feature type="topological domain" description="Lumenal" evidence="1">
    <location>
        <begin position="163"/>
        <end position="166"/>
    </location>
</feature>
<feature type="transmembrane region" description="Helical" evidence="2">
    <location>
        <begin position="167"/>
        <end position="187"/>
    </location>
</feature>
<feature type="topological domain" description="Cytoplasmic" evidence="1">
    <location>
        <begin position="188"/>
        <end position="205"/>
    </location>
</feature>
<feature type="transmembrane region" description="Helical" evidence="2">
    <location>
        <begin position="206"/>
        <end position="226"/>
    </location>
</feature>
<feature type="topological domain" description="Lumenal" evidence="1">
    <location>
        <begin position="227"/>
        <end position="256"/>
    </location>
</feature>
<feature type="transmembrane region" description="Helical" evidence="2">
    <location>
        <begin position="257"/>
        <end position="276"/>
    </location>
</feature>
<feature type="topological domain" description="Cytoplasmic" evidence="1">
    <location>
        <begin position="277"/>
        <end position="289"/>
    </location>
</feature>
<feature type="transmembrane region" description="Helical" evidence="2">
    <location>
        <begin position="290"/>
        <end position="310"/>
    </location>
</feature>
<feature type="topological domain" description="Lumenal" evidence="1">
    <location>
        <begin position="311"/>
        <end position="324"/>
    </location>
</feature>
<feature type="transmembrane region" description="Helical" evidence="2">
    <location>
        <begin position="325"/>
        <end position="345"/>
    </location>
</feature>
<feature type="topological domain" description="Cytoplasmic" evidence="1">
    <location>
        <begin position="346"/>
        <end position="352"/>
    </location>
</feature>
<feature type="short sequence motif" description="Prevents secretion from ER" evidence="2">
    <location>
        <begin position="349"/>
        <end position="352"/>
    </location>
</feature>
<feature type="active site" description="Proton donor" evidence="2">
    <location>
        <position position="115"/>
    </location>
</feature>
<feature type="active site" description="Nucleophile" evidence="1">
    <location>
        <position position="172"/>
    </location>
</feature>
<feature type="binding site" evidence="2">
    <location>
        <position position="79"/>
    </location>
    <ligand>
        <name>substrate</name>
    </ligand>
</feature>
<feature type="binding site" evidence="2">
    <location>
        <position position="166"/>
    </location>
    <ligand>
        <name>substrate</name>
    </ligand>
</feature>
<sequence length="352" mass="39904">MDLLHSWGVELAVYLQTRYGKYEGLFDLASTVADLHTTFFWLFPIWFHLRRDTALRLIWVAVIGDWLNLVLKWVLFGERPYWWVHETKFYGAGPAPSLQQFPITCETGPGSPSGHAMGAAGVWYVMVTALLSIAREKQCPPLLYRFLYIGLWMLMGLVELVVCISRVYMAAHFPHQVIAGIITGTLVAEVVSKEKWIYSASLKKYFLITLFLTSFAVGFYVLLKALDVDLLWTMEKAQKWCIRPEWVHLDSAPFASLLRNMGSLFGLGLGLHSPFYKTTKMRIMSAPLRIGCIVISVSLLHLLDGWTFSPENHMTFYALSFGKSAVALLIPTTLVPWALSKIYPVKTEGKNL</sequence>
<name>G6PC1_HAPNU</name>
<protein>
    <recommendedName>
        <fullName>Glucose-6-phosphatase catalytic subunit 1</fullName>
        <ecNumber evidence="1">3.1.3.9</ecNumber>
    </recommendedName>
    <alternativeName>
        <fullName>Glucose-6-phosphatase</fullName>
        <shortName>G-6-Pase</shortName>
        <shortName>G6Pase</shortName>
    </alternativeName>
</protein>
<organism>
    <name type="scientific">Haplochromis nubilus</name>
    <name type="common">Blue Victoria mouthbrooder</name>
    <name type="synonym">Tilapia nubila</name>
    <dbReference type="NCBI Taxonomy" id="51172"/>
    <lineage>
        <taxon>Eukaryota</taxon>
        <taxon>Metazoa</taxon>
        <taxon>Chordata</taxon>
        <taxon>Craniata</taxon>
        <taxon>Vertebrata</taxon>
        <taxon>Euteleostomi</taxon>
        <taxon>Actinopterygii</taxon>
        <taxon>Neopterygii</taxon>
        <taxon>Teleostei</taxon>
        <taxon>Neoteleostei</taxon>
        <taxon>Acanthomorphata</taxon>
        <taxon>Ovalentaria</taxon>
        <taxon>Cichlomorphae</taxon>
        <taxon>Cichliformes</taxon>
        <taxon>Cichlidae</taxon>
        <taxon>African cichlids</taxon>
        <taxon>Pseudocrenilabrinae</taxon>
        <taxon>Haplochromini</taxon>
        <taxon>Haplochromis</taxon>
    </lineage>
</organism>
<gene>
    <name type="primary">g6pc1</name>
    <name type="synonym">g6pc</name>
    <name type="synonym">g6pt</name>
</gene>
<reference key="1">
    <citation type="journal article" date="1999" name="DNA Seq.">
        <title>Isolation and sequencing of cDNA clones coding for the catalytic unit of glucose-6-phosphatase from two haplochromine cichlid fishes.</title>
        <authorList>
            <person name="Nagl S."/>
            <person name="Mayer W.E."/>
            <person name="Klein J."/>
        </authorList>
    </citation>
    <scope>NUCLEOTIDE SEQUENCE [MRNA]</scope>
</reference>
<keyword id="KW-0256">Endoplasmic reticulum</keyword>
<keyword id="KW-0312">Gluconeogenesis</keyword>
<keyword id="KW-0378">Hydrolase</keyword>
<keyword id="KW-0472">Membrane</keyword>
<keyword id="KW-0812">Transmembrane</keyword>
<keyword id="KW-1133">Transmembrane helix</keyword>
<proteinExistence type="evidence at transcript level"/>
<accession>O42153</accession>
<evidence type="ECO:0000250" key="1">
    <source>
        <dbReference type="UniProtKB" id="P35575"/>
    </source>
</evidence>
<evidence type="ECO:0000255" key="2"/>
<evidence type="ECO:0000305" key="3"/>
<comment type="function">
    <text evidence="1">Hydrolyzes glucose-6-phosphate to glucose in the endoplasmic reticulum. Forms with the glucose-6-phosphate transporter (SLC37A4/G6PT) the complex responsible for glucose production in the terminal step of glycogenolysis and gluconeogenesis. Hence, it is the key enzyme in homeostatic regulation of blood glucose levels.</text>
</comment>
<comment type="catalytic activity">
    <reaction evidence="1">
        <text>D-glucose 6-phosphate + H2O = D-glucose + phosphate</text>
        <dbReference type="Rhea" id="RHEA:16689"/>
        <dbReference type="ChEBI" id="CHEBI:4167"/>
        <dbReference type="ChEBI" id="CHEBI:15377"/>
        <dbReference type="ChEBI" id="CHEBI:43474"/>
        <dbReference type="ChEBI" id="CHEBI:61548"/>
        <dbReference type="EC" id="3.1.3.9"/>
    </reaction>
</comment>
<comment type="pathway">
    <text evidence="1">Carbohydrate biosynthesis; gluconeogenesis.</text>
</comment>
<comment type="subcellular location">
    <subcellularLocation>
        <location evidence="1">Endoplasmic reticulum membrane</location>
        <topology evidence="2">Multi-pass membrane protein</topology>
    </subcellularLocation>
</comment>
<comment type="similarity">
    <text evidence="3">Belongs to the glucose-6-phosphatase family.</text>
</comment>
<dbReference type="EC" id="3.1.3.9" evidence="1"/>
<dbReference type="EMBL" id="AF008945">
    <property type="protein sequence ID" value="AAB69285.1"/>
    <property type="molecule type" value="mRNA"/>
</dbReference>
<dbReference type="UniPathway" id="UPA00138"/>
<dbReference type="GO" id="GO:0005789">
    <property type="term" value="C:endoplasmic reticulum membrane"/>
    <property type="evidence" value="ECO:0007669"/>
    <property type="project" value="UniProtKB-SubCell"/>
</dbReference>
<dbReference type="GO" id="GO:0004346">
    <property type="term" value="F:glucose-6-phosphatase activity"/>
    <property type="evidence" value="ECO:0007669"/>
    <property type="project" value="UniProtKB-EC"/>
</dbReference>
<dbReference type="GO" id="GO:0006094">
    <property type="term" value="P:gluconeogenesis"/>
    <property type="evidence" value="ECO:0007669"/>
    <property type="project" value="UniProtKB-UniPathway"/>
</dbReference>
<dbReference type="GO" id="GO:0051156">
    <property type="term" value="P:glucose 6-phosphate metabolic process"/>
    <property type="evidence" value="ECO:0007669"/>
    <property type="project" value="TreeGrafter"/>
</dbReference>
<dbReference type="CDD" id="cd03381">
    <property type="entry name" value="PAP2_glucose_6_phosphatase"/>
    <property type="match status" value="1"/>
</dbReference>
<dbReference type="Gene3D" id="1.20.144.10">
    <property type="entry name" value="Phosphatidic acid phosphatase type 2/haloperoxidase"/>
    <property type="match status" value="1"/>
</dbReference>
<dbReference type="InterPro" id="IPR016275">
    <property type="entry name" value="Glucose-6-phosphatase"/>
</dbReference>
<dbReference type="InterPro" id="IPR036938">
    <property type="entry name" value="P_Acid_Pase_2/haloperoxi_sf"/>
</dbReference>
<dbReference type="InterPro" id="IPR000326">
    <property type="entry name" value="P_Acid_Pase_2/haloperoxidase"/>
</dbReference>
<dbReference type="PANTHER" id="PTHR12591">
    <property type="entry name" value="GLUCOSE-6-PHOSPHATASE"/>
    <property type="match status" value="1"/>
</dbReference>
<dbReference type="PANTHER" id="PTHR12591:SF5">
    <property type="entry name" value="GLUCOSE-6-PHOSPHATASE"/>
    <property type="match status" value="1"/>
</dbReference>
<dbReference type="Pfam" id="PF01569">
    <property type="entry name" value="PAP2"/>
    <property type="match status" value="1"/>
</dbReference>
<dbReference type="PIRSF" id="PIRSF000905">
    <property type="entry name" value="Glucose-6-phosphatase"/>
    <property type="match status" value="1"/>
</dbReference>
<dbReference type="SMART" id="SM00014">
    <property type="entry name" value="acidPPc"/>
    <property type="match status" value="1"/>
</dbReference>
<dbReference type="SUPFAM" id="SSF48317">
    <property type="entry name" value="Acid phosphatase/Vanadium-dependent haloperoxidase"/>
    <property type="match status" value="1"/>
</dbReference>